<reference key="1">
    <citation type="journal article" date="2005" name="Proc. Natl. Acad. Sci. U.S.A.">
        <title>The psychrophilic lifestyle as revealed by the genome sequence of Colwellia psychrerythraea 34H through genomic and proteomic analyses.</title>
        <authorList>
            <person name="Methe B.A."/>
            <person name="Nelson K.E."/>
            <person name="Deming J.W."/>
            <person name="Momen B."/>
            <person name="Melamud E."/>
            <person name="Zhang X."/>
            <person name="Moult J."/>
            <person name="Madupu R."/>
            <person name="Nelson W.C."/>
            <person name="Dodson R.J."/>
            <person name="Brinkac L.M."/>
            <person name="Daugherty S.C."/>
            <person name="Durkin A.S."/>
            <person name="DeBoy R.T."/>
            <person name="Kolonay J.F."/>
            <person name="Sullivan S.A."/>
            <person name="Zhou L."/>
            <person name="Davidsen T.M."/>
            <person name="Wu M."/>
            <person name="Huston A.L."/>
            <person name="Lewis M."/>
            <person name="Weaver B."/>
            <person name="Weidman J.F."/>
            <person name="Khouri H."/>
            <person name="Utterback T.R."/>
            <person name="Feldblyum T.V."/>
            <person name="Fraser C.M."/>
        </authorList>
    </citation>
    <scope>NUCLEOTIDE SEQUENCE [LARGE SCALE GENOMIC DNA]</scope>
    <source>
        <strain>34H / ATCC BAA-681</strain>
    </source>
</reference>
<keyword id="KW-0963">Cytoplasm</keyword>
<keyword id="KW-0448">Lipopolysaccharide biosynthesis</keyword>
<keyword id="KW-0548">Nucleotidyltransferase</keyword>
<keyword id="KW-0808">Transferase</keyword>
<comment type="function">
    <text evidence="1">Activates KDO (a required 8-carbon sugar) for incorporation into bacterial lipopolysaccharide in Gram-negative bacteria.</text>
</comment>
<comment type="catalytic activity">
    <reaction evidence="1">
        <text>3-deoxy-alpha-D-manno-oct-2-ulosonate + CTP = CMP-3-deoxy-beta-D-manno-octulosonate + diphosphate</text>
        <dbReference type="Rhea" id="RHEA:23448"/>
        <dbReference type="ChEBI" id="CHEBI:33019"/>
        <dbReference type="ChEBI" id="CHEBI:37563"/>
        <dbReference type="ChEBI" id="CHEBI:85986"/>
        <dbReference type="ChEBI" id="CHEBI:85987"/>
        <dbReference type="EC" id="2.7.7.38"/>
    </reaction>
</comment>
<comment type="pathway">
    <text evidence="1">Nucleotide-sugar biosynthesis; CMP-3-deoxy-D-manno-octulosonate biosynthesis; CMP-3-deoxy-D-manno-octulosonate from 3-deoxy-D-manno-octulosonate and CTP: step 1/1.</text>
</comment>
<comment type="pathway">
    <text evidence="1">Bacterial outer membrane biogenesis; lipopolysaccharide biosynthesis.</text>
</comment>
<comment type="subcellular location">
    <subcellularLocation>
        <location evidence="1">Cytoplasm</location>
    </subcellularLocation>
</comment>
<comment type="similarity">
    <text evidence="1">Belongs to the KdsB family.</text>
</comment>
<sequence length="280" mass="30878">MTASDPSVLSKPATGDTSFVVVIPARYQSSRLPGKVLADIDGKPMIQWVVEKAQLSGARQVIVATDNDEVAAVVNSFGAEVCKTRADHQSGTERLAEVMEKYQFSDDEIIVNVQGDEPFIPPDNIAQVANNLANQQQSSHVARMSTLAINIDSVDEAFNPNAVKVILDKDGYALYFSRATIPYDRERFLNSDATTEENIRAIGDFYLRHVGIYAYRAGFIKDYVNWPTSELEQVEALEQLRVLYQGERIHVAVANSHVPVEGVDTPEDLAKARAYATSLV</sequence>
<proteinExistence type="inferred from homology"/>
<protein>
    <recommendedName>
        <fullName evidence="1">3-deoxy-manno-octulosonate cytidylyltransferase</fullName>
        <ecNumber evidence="1">2.7.7.38</ecNumber>
    </recommendedName>
    <alternativeName>
        <fullName evidence="1">CMP-2-keto-3-deoxyoctulosonic acid synthase</fullName>
        <shortName evidence="1">CKS</shortName>
        <shortName evidence="1">CMP-KDO synthase</shortName>
    </alternativeName>
</protein>
<organism>
    <name type="scientific">Colwellia psychrerythraea (strain 34H / ATCC BAA-681)</name>
    <name type="common">Vibrio psychroerythus</name>
    <dbReference type="NCBI Taxonomy" id="167879"/>
    <lineage>
        <taxon>Bacteria</taxon>
        <taxon>Pseudomonadati</taxon>
        <taxon>Pseudomonadota</taxon>
        <taxon>Gammaproteobacteria</taxon>
        <taxon>Alteromonadales</taxon>
        <taxon>Colwelliaceae</taxon>
        <taxon>Colwellia</taxon>
    </lineage>
</organism>
<evidence type="ECO:0000255" key="1">
    <source>
        <dbReference type="HAMAP-Rule" id="MF_00057"/>
    </source>
</evidence>
<name>KDSB_COLP3</name>
<dbReference type="EC" id="2.7.7.38" evidence="1"/>
<dbReference type="EMBL" id="CP000083">
    <property type="protein sequence ID" value="AAZ28288.1"/>
    <property type="molecule type" value="Genomic_DNA"/>
</dbReference>
<dbReference type="RefSeq" id="WP_011042948.1">
    <property type="nucleotide sequence ID" value="NC_003910.7"/>
</dbReference>
<dbReference type="SMR" id="Q483B3"/>
<dbReference type="STRING" id="167879.CPS_2128"/>
<dbReference type="KEGG" id="cps:CPS_2128"/>
<dbReference type="eggNOG" id="COG1212">
    <property type="taxonomic scope" value="Bacteria"/>
</dbReference>
<dbReference type="HOGENOM" id="CLU_065038_1_0_6"/>
<dbReference type="UniPathway" id="UPA00030"/>
<dbReference type="UniPathway" id="UPA00358">
    <property type="reaction ID" value="UER00476"/>
</dbReference>
<dbReference type="Proteomes" id="UP000000547">
    <property type="component" value="Chromosome"/>
</dbReference>
<dbReference type="GO" id="GO:0005829">
    <property type="term" value="C:cytosol"/>
    <property type="evidence" value="ECO:0007669"/>
    <property type="project" value="TreeGrafter"/>
</dbReference>
<dbReference type="GO" id="GO:0008690">
    <property type="term" value="F:3-deoxy-manno-octulosonate cytidylyltransferase activity"/>
    <property type="evidence" value="ECO:0007669"/>
    <property type="project" value="UniProtKB-UniRule"/>
</dbReference>
<dbReference type="GO" id="GO:0033468">
    <property type="term" value="P:CMP-keto-3-deoxy-D-manno-octulosonic acid biosynthetic process"/>
    <property type="evidence" value="ECO:0007669"/>
    <property type="project" value="UniProtKB-UniRule"/>
</dbReference>
<dbReference type="GO" id="GO:0009103">
    <property type="term" value="P:lipopolysaccharide biosynthetic process"/>
    <property type="evidence" value="ECO:0007669"/>
    <property type="project" value="UniProtKB-UniRule"/>
</dbReference>
<dbReference type="CDD" id="cd02517">
    <property type="entry name" value="CMP-KDO-Synthetase"/>
    <property type="match status" value="1"/>
</dbReference>
<dbReference type="FunFam" id="3.90.550.10:FF:000011">
    <property type="entry name" value="3-deoxy-manno-octulosonate cytidylyltransferase"/>
    <property type="match status" value="1"/>
</dbReference>
<dbReference type="Gene3D" id="3.90.550.10">
    <property type="entry name" value="Spore Coat Polysaccharide Biosynthesis Protein SpsA, Chain A"/>
    <property type="match status" value="1"/>
</dbReference>
<dbReference type="HAMAP" id="MF_00057">
    <property type="entry name" value="KdsB"/>
    <property type="match status" value="1"/>
</dbReference>
<dbReference type="InterPro" id="IPR003329">
    <property type="entry name" value="Cytidylyl_trans"/>
</dbReference>
<dbReference type="InterPro" id="IPR004528">
    <property type="entry name" value="KdsB"/>
</dbReference>
<dbReference type="InterPro" id="IPR029044">
    <property type="entry name" value="Nucleotide-diphossugar_trans"/>
</dbReference>
<dbReference type="NCBIfam" id="TIGR00466">
    <property type="entry name" value="kdsB"/>
    <property type="match status" value="1"/>
</dbReference>
<dbReference type="NCBIfam" id="NF003950">
    <property type="entry name" value="PRK05450.1-3"/>
    <property type="match status" value="1"/>
</dbReference>
<dbReference type="NCBIfam" id="NF003952">
    <property type="entry name" value="PRK05450.1-5"/>
    <property type="match status" value="1"/>
</dbReference>
<dbReference type="NCBIfam" id="NF009905">
    <property type="entry name" value="PRK13368.1"/>
    <property type="match status" value="1"/>
</dbReference>
<dbReference type="PANTHER" id="PTHR42866">
    <property type="entry name" value="3-DEOXY-MANNO-OCTULOSONATE CYTIDYLYLTRANSFERASE"/>
    <property type="match status" value="1"/>
</dbReference>
<dbReference type="PANTHER" id="PTHR42866:SF2">
    <property type="entry name" value="3-DEOXY-MANNO-OCTULOSONATE CYTIDYLYLTRANSFERASE, MITOCHONDRIAL"/>
    <property type="match status" value="1"/>
</dbReference>
<dbReference type="Pfam" id="PF02348">
    <property type="entry name" value="CTP_transf_3"/>
    <property type="match status" value="1"/>
</dbReference>
<dbReference type="SUPFAM" id="SSF53448">
    <property type="entry name" value="Nucleotide-diphospho-sugar transferases"/>
    <property type="match status" value="1"/>
</dbReference>
<accession>Q483B3</accession>
<gene>
    <name evidence="1" type="primary">kdsB</name>
    <name type="ordered locus">CPS_2128</name>
</gene>
<feature type="chain" id="PRO_0000370050" description="3-deoxy-manno-octulosonate cytidylyltransferase">
    <location>
        <begin position="1"/>
        <end position="280"/>
    </location>
</feature>